<keyword id="KW-0963">Cytoplasm</keyword>
<keyword id="KW-0413">Isomerase</keyword>
<keyword id="KW-0627">Porphyrin biosynthesis</keyword>
<keyword id="KW-0663">Pyridoxal phosphate</keyword>
<protein>
    <recommendedName>
        <fullName evidence="1">Glutamate-1-semialdehyde 2,1-aminomutase</fullName>
        <shortName evidence="1">GSA</shortName>
        <ecNumber evidence="1">5.4.3.8</ecNumber>
    </recommendedName>
    <alternativeName>
        <fullName evidence="1">Glutamate-1-semialdehyde aminotransferase</fullName>
        <shortName evidence="1">GSA-AT</shortName>
    </alternativeName>
</protein>
<reference key="1">
    <citation type="journal article" date="2006" name="Genome Res.">
        <title>Massive genome erosion and functional adaptations provide insights into the symbiotic lifestyle of Sodalis glossinidius in the tsetse host.</title>
        <authorList>
            <person name="Toh H."/>
            <person name="Weiss B.L."/>
            <person name="Perkin S.A.H."/>
            <person name="Yamashita A."/>
            <person name="Oshima K."/>
            <person name="Hattori M."/>
            <person name="Aksoy S."/>
        </authorList>
    </citation>
    <scope>NUCLEOTIDE SEQUENCE [LARGE SCALE GENOMIC DNA]</scope>
    <source>
        <strain>morsitans</strain>
    </source>
</reference>
<comment type="catalytic activity">
    <reaction evidence="1">
        <text>(S)-4-amino-5-oxopentanoate = 5-aminolevulinate</text>
        <dbReference type="Rhea" id="RHEA:14265"/>
        <dbReference type="ChEBI" id="CHEBI:57501"/>
        <dbReference type="ChEBI" id="CHEBI:356416"/>
        <dbReference type="EC" id="5.4.3.8"/>
    </reaction>
</comment>
<comment type="cofactor">
    <cofactor evidence="1">
        <name>pyridoxal 5'-phosphate</name>
        <dbReference type="ChEBI" id="CHEBI:597326"/>
    </cofactor>
</comment>
<comment type="pathway">
    <text evidence="1">Porphyrin-containing compound metabolism; protoporphyrin-IX biosynthesis; 5-aminolevulinate from L-glutamyl-tRNA(Glu): step 2/2.</text>
</comment>
<comment type="subunit">
    <text evidence="1">Homodimer.</text>
</comment>
<comment type="subcellular location">
    <subcellularLocation>
        <location evidence="1">Cytoplasm</location>
    </subcellularLocation>
</comment>
<comment type="similarity">
    <text evidence="1">Belongs to the class-III pyridoxal-phosphate-dependent aminotransferase family. HemL subfamily.</text>
</comment>
<accession>Q2NVQ0</accession>
<feature type="chain" id="PRO_0000243618" description="Glutamate-1-semialdehyde 2,1-aminomutase">
    <location>
        <begin position="1"/>
        <end position="426"/>
    </location>
</feature>
<feature type="modified residue" description="N6-(pyridoxal phosphate)lysine" evidence="1">
    <location>
        <position position="265"/>
    </location>
</feature>
<proteinExistence type="inferred from homology"/>
<dbReference type="EC" id="5.4.3.8" evidence="1"/>
<dbReference type="EMBL" id="AP008232">
    <property type="protein sequence ID" value="BAE73775.1"/>
    <property type="molecule type" value="Genomic_DNA"/>
</dbReference>
<dbReference type="RefSeq" id="WP_011410473.1">
    <property type="nucleotide sequence ID" value="NC_007712.1"/>
</dbReference>
<dbReference type="SMR" id="Q2NVQ0"/>
<dbReference type="STRING" id="343509.SG0500"/>
<dbReference type="KEGG" id="sgl:SG0500"/>
<dbReference type="eggNOG" id="COG0001">
    <property type="taxonomic scope" value="Bacteria"/>
</dbReference>
<dbReference type="HOGENOM" id="CLU_016922_1_5_6"/>
<dbReference type="OrthoDB" id="9801052at2"/>
<dbReference type="BioCyc" id="SGLO343509:SGP1_RS04460-MONOMER"/>
<dbReference type="UniPathway" id="UPA00251">
    <property type="reaction ID" value="UER00317"/>
</dbReference>
<dbReference type="Proteomes" id="UP000001932">
    <property type="component" value="Chromosome"/>
</dbReference>
<dbReference type="GO" id="GO:0005737">
    <property type="term" value="C:cytoplasm"/>
    <property type="evidence" value="ECO:0007669"/>
    <property type="project" value="UniProtKB-SubCell"/>
</dbReference>
<dbReference type="GO" id="GO:0042286">
    <property type="term" value="F:glutamate-1-semialdehyde 2,1-aminomutase activity"/>
    <property type="evidence" value="ECO:0007669"/>
    <property type="project" value="UniProtKB-UniRule"/>
</dbReference>
<dbReference type="GO" id="GO:0030170">
    <property type="term" value="F:pyridoxal phosphate binding"/>
    <property type="evidence" value="ECO:0007669"/>
    <property type="project" value="InterPro"/>
</dbReference>
<dbReference type="GO" id="GO:0008483">
    <property type="term" value="F:transaminase activity"/>
    <property type="evidence" value="ECO:0007669"/>
    <property type="project" value="InterPro"/>
</dbReference>
<dbReference type="GO" id="GO:0006782">
    <property type="term" value="P:protoporphyrinogen IX biosynthetic process"/>
    <property type="evidence" value="ECO:0007669"/>
    <property type="project" value="UniProtKB-UniRule"/>
</dbReference>
<dbReference type="CDD" id="cd00610">
    <property type="entry name" value="OAT_like"/>
    <property type="match status" value="1"/>
</dbReference>
<dbReference type="FunFam" id="3.40.640.10:FF:000021">
    <property type="entry name" value="Glutamate-1-semialdehyde 2,1-aminomutase"/>
    <property type="match status" value="1"/>
</dbReference>
<dbReference type="FunFam" id="3.90.1150.10:FF:000012">
    <property type="entry name" value="Glutamate-1-semialdehyde 2,1-aminomutase"/>
    <property type="match status" value="1"/>
</dbReference>
<dbReference type="Gene3D" id="3.90.1150.10">
    <property type="entry name" value="Aspartate Aminotransferase, domain 1"/>
    <property type="match status" value="1"/>
</dbReference>
<dbReference type="Gene3D" id="3.40.640.10">
    <property type="entry name" value="Type I PLP-dependent aspartate aminotransferase-like (Major domain)"/>
    <property type="match status" value="1"/>
</dbReference>
<dbReference type="HAMAP" id="MF_00375">
    <property type="entry name" value="HemL_aminotrans_3"/>
    <property type="match status" value="1"/>
</dbReference>
<dbReference type="InterPro" id="IPR004639">
    <property type="entry name" value="4pyrrol_synth_GluAld_NH2Trfase"/>
</dbReference>
<dbReference type="InterPro" id="IPR005814">
    <property type="entry name" value="Aminotrans_3"/>
</dbReference>
<dbReference type="InterPro" id="IPR049704">
    <property type="entry name" value="Aminotrans_3_PPA_site"/>
</dbReference>
<dbReference type="InterPro" id="IPR015424">
    <property type="entry name" value="PyrdxlP-dep_Trfase"/>
</dbReference>
<dbReference type="InterPro" id="IPR015421">
    <property type="entry name" value="PyrdxlP-dep_Trfase_major"/>
</dbReference>
<dbReference type="InterPro" id="IPR015422">
    <property type="entry name" value="PyrdxlP-dep_Trfase_small"/>
</dbReference>
<dbReference type="NCBIfam" id="TIGR00713">
    <property type="entry name" value="hemL"/>
    <property type="match status" value="1"/>
</dbReference>
<dbReference type="NCBIfam" id="NF000818">
    <property type="entry name" value="PRK00062.1"/>
    <property type="match status" value="1"/>
</dbReference>
<dbReference type="PANTHER" id="PTHR43713">
    <property type="entry name" value="GLUTAMATE-1-SEMIALDEHYDE 2,1-AMINOMUTASE"/>
    <property type="match status" value="1"/>
</dbReference>
<dbReference type="PANTHER" id="PTHR43713:SF3">
    <property type="entry name" value="GLUTAMATE-1-SEMIALDEHYDE 2,1-AMINOMUTASE 1, CHLOROPLASTIC-RELATED"/>
    <property type="match status" value="1"/>
</dbReference>
<dbReference type="Pfam" id="PF00202">
    <property type="entry name" value="Aminotran_3"/>
    <property type="match status" value="1"/>
</dbReference>
<dbReference type="SUPFAM" id="SSF53383">
    <property type="entry name" value="PLP-dependent transferases"/>
    <property type="match status" value="1"/>
</dbReference>
<dbReference type="PROSITE" id="PS00600">
    <property type="entry name" value="AA_TRANSFER_CLASS_3"/>
    <property type="match status" value="1"/>
</dbReference>
<sequence>MSHSASLYAEAQQLIPGGVNSPVRAFNGVGGTPLFIASADGARLTDADGNSYIDYVGSWGPMVLGHNHPAIRQAVLDAVQRGLSFGAPTEIEVKMARLLTELVPSIESVRMVNSGTEATMSTIRLARGYTGRDRVIKFEGCYHGHADGLLVKAGSGALTLGQPSSPGVPADYAKYTLTCSYNDLQSVREAFTLYPREIACVIVEPVAGNMNCVPPLPEFLPGLRALCDEFGALLIIDEVMTGFRVELGGAQAYYDVKPDLTCLGKIIGGGMPVGAFGGRREVMAALAPTGPVYQAGTLSGNPVAIAAGYACLREVARPGVHQQLTQQTERLAQGLLAAAEAAGVPLVVNRVGGMFGLFFTESPTVTCFQDVQACDVDRFKRFFHLMLAAGVYLAPSAFEAGFMSLAHGDAEIRHTVEAAAQSFAQL</sequence>
<evidence type="ECO:0000255" key="1">
    <source>
        <dbReference type="HAMAP-Rule" id="MF_00375"/>
    </source>
</evidence>
<organism>
    <name type="scientific">Sodalis glossinidius (strain morsitans)</name>
    <dbReference type="NCBI Taxonomy" id="343509"/>
    <lineage>
        <taxon>Bacteria</taxon>
        <taxon>Pseudomonadati</taxon>
        <taxon>Pseudomonadota</taxon>
        <taxon>Gammaproteobacteria</taxon>
        <taxon>Enterobacterales</taxon>
        <taxon>Bruguierivoracaceae</taxon>
        <taxon>Sodalis</taxon>
    </lineage>
</organism>
<name>GSA_SODGM</name>
<gene>
    <name evidence="1" type="primary">hemL</name>
    <name type="ordered locus">SG0500</name>
</gene>